<protein>
    <recommendedName>
        <fullName evidence="1">tRNA (guanine-N(1)-)-methyltransferase</fullName>
        <ecNumber evidence="1">2.1.1.228</ecNumber>
    </recommendedName>
    <alternativeName>
        <fullName evidence="1">M1G-methyltransferase</fullName>
    </alternativeName>
    <alternativeName>
        <fullName evidence="1">tRNA [GM37] methyltransferase</fullName>
    </alternativeName>
</protein>
<organism>
    <name type="scientific">Borrelia duttonii (strain Ly)</name>
    <dbReference type="NCBI Taxonomy" id="412419"/>
    <lineage>
        <taxon>Bacteria</taxon>
        <taxon>Pseudomonadati</taxon>
        <taxon>Spirochaetota</taxon>
        <taxon>Spirochaetia</taxon>
        <taxon>Spirochaetales</taxon>
        <taxon>Borreliaceae</taxon>
        <taxon>Borrelia</taxon>
    </lineage>
</organism>
<feature type="chain" id="PRO_1000130137" description="tRNA (guanine-N(1)-)-methyltransferase">
    <location>
        <begin position="1"/>
        <end position="240"/>
    </location>
</feature>
<feature type="binding site" evidence="1">
    <location>
        <position position="110"/>
    </location>
    <ligand>
        <name>S-adenosyl-L-methionine</name>
        <dbReference type="ChEBI" id="CHEBI:59789"/>
    </ligand>
</feature>
<feature type="binding site" evidence="1">
    <location>
        <begin position="130"/>
        <end position="135"/>
    </location>
    <ligand>
        <name>S-adenosyl-L-methionine</name>
        <dbReference type="ChEBI" id="CHEBI:59789"/>
    </ligand>
</feature>
<name>TRMD_BORDL</name>
<accession>B5RMP3</accession>
<sequence length="240" mass="27441">MKITILSLFPSIITPFFENSIMKKVVDKGIISYEVISIRDFSKDKHKRCDDVPYGGGAGMVLKVQPIVDALEYVNANSKTTIFVSPSGLKYTQKLAYDLSKKDELVIICGRYEGLDQRVIDLYVDLEISVGDYVLSSGEVAALVIIDSVYRLLDGVINPNSLCEESFSFECGLLEYPHYTRPYEFRNLKVPDVLLSGHHEEIKKWRLVKSVEKTKKNRFDLYLKYLEMRGEKNDGFDKKN</sequence>
<comment type="function">
    <text evidence="1">Specifically methylates guanosine-37 in various tRNAs.</text>
</comment>
<comment type="catalytic activity">
    <reaction evidence="1">
        <text>guanosine(37) in tRNA + S-adenosyl-L-methionine = N(1)-methylguanosine(37) in tRNA + S-adenosyl-L-homocysteine + H(+)</text>
        <dbReference type="Rhea" id="RHEA:36899"/>
        <dbReference type="Rhea" id="RHEA-COMP:10145"/>
        <dbReference type="Rhea" id="RHEA-COMP:10147"/>
        <dbReference type="ChEBI" id="CHEBI:15378"/>
        <dbReference type="ChEBI" id="CHEBI:57856"/>
        <dbReference type="ChEBI" id="CHEBI:59789"/>
        <dbReference type="ChEBI" id="CHEBI:73542"/>
        <dbReference type="ChEBI" id="CHEBI:74269"/>
        <dbReference type="EC" id="2.1.1.228"/>
    </reaction>
</comment>
<comment type="subunit">
    <text evidence="1">Homodimer.</text>
</comment>
<comment type="subcellular location">
    <subcellularLocation>
        <location evidence="1">Cytoplasm</location>
    </subcellularLocation>
</comment>
<comment type="similarity">
    <text evidence="1">Belongs to the RNA methyltransferase TrmD family.</text>
</comment>
<reference key="1">
    <citation type="journal article" date="2008" name="PLoS Genet.">
        <title>The genome of Borrelia recurrentis, the agent of deadly louse-borne relapsing fever, is a degraded subset of tick-borne Borrelia duttonii.</title>
        <authorList>
            <person name="Lescot M."/>
            <person name="Audic S."/>
            <person name="Robert C."/>
            <person name="Nguyen T.T."/>
            <person name="Blanc G."/>
            <person name="Cutler S.J."/>
            <person name="Wincker P."/>
            <person name="Couloux A."/>
            <person name="Claverie J.-M."/>
            <person name="Raoult D."/>
            <person name="Drancourt M."/>
        </authorList>
    </citation>
    <scope>NUCLEOTIDE SEQUENCE [LARGE SCALE GENOMIC DNA]</scope>
    <source>
        <strain>Ly</strain>
    </source>
</reference>
<gene>
    <name evidence="1" type="primary">trmD</name>
    <name type="ordered locus">BDU_701</name>
</gene>
<evidence type="ECO:0000255" key="1">
    <source>
        <dbReference type="HAMAP-Rule" id="MF_00605"/>
    </source>
</evidence>
<proteinExistence type="inferred from homology"/>
<dbReference type="EC" id="2.1.1.228" evidence="1"/>
<dbReference type="EMBL" id="CP000976">
    <property type="protein sequence ID" value="ACH93629.1"/>
    <property type="molecule type" value="Genomic_DNA"/>
</dbReference>
<dbReference type="RefSeq" id="WP_012538438.1">
    <property type="nucleotide sequence ID" value="NC_011229.1"/>
</dbReference>
<dbReference type="SMR" id="B5RMP3"/>
<dbReference type="STRING" id="412419.BDU_701"/>
<dbReference type="KEGG" id="bdu:BDU_701"/>
<dbReference type="eggNOG" id="COG0336">
    <property type="taxonomic scope" value="Bacteria"/>
</dbReference>
<dbReference type="HOGENOM" id="CLU_047363_0_1_12"/>
<dbReference type="OrthoDB" id="9807416at2"/>
<dbReference type="Proteomes" id="UP000000611">
    <property type="component" value="Chromosome"/>
</dbReference>
<dbReference type="GO" id="GO:0005829">
    <property type="term" value="C:cytosol"/>
    <property type="evidence" value="ECO:0007669"/>
    <property type="project" value="TreeGrafter"/>
</dbReference>
<dbReference type="GO" id="GO:0052906">
    <property type="term" value="F:tRNA (guanine(37)-N1)-methyltransferase activity"/>
    <property type="evidence" value="ECO:0007669"/>
    <property type="project" value="UniProtKB-UniRule"/>
</dbReference>
<dbReference type="GO" id="GO:0002939">
    <property type="term" value="P:tRNA N1-guanine methylation"/>
    <property type="evidence" value="ECO:0007669"/>
    <property type="project" value="TreeGrafter"/>
</dbReference>
<dbReference type="CDD" id="cd18080">
    <property type="entry name" value="TrmD-like"/>
    <property type="match status" value="1"/>
</dbReference>
<dbReference type="FunFam" id="3.40.1280.10:FF:000001">
    <property type="entry name" value="tRNA (guanine-N(1)-)-methyltransferase"/>
    <property type="match status" value="1"/>
</dbReference>
<dbReference type="Gene3D" id="3.40.1280.10">
    <property type="match status" value="1"/>
</dbReference>
<dbReference type="Gene3D" id="1.10.1270.20">
    <property type="entry name" value="tRNA(m1g37)methyltransferase, domain 2"/>
    <property type="match status" value="1"/>
</dbReference>
<dbReference type="HAMAP" id="MF_00605">
    <property type="entry name" value="TrmD"/>
    <property type="match status" value="1"/>
</dbReference>
<dbReference type="InterPro" id="IPR029028">
    <property type="entry name" value="Alpha/beta_knot_MTases"/>
</dbReference>
<dbReference type="InterPro" id="IPR023148">
    <property type="entry name" value="tRNA_m1G_MeTrfase_C_sf"/>
</dbReference>
<dbReference type="InterPro" id="IPR002649">
    <property type="entry name" value="tRNA_m1G_MeTrfase_TrmD"/>
</dbReference>
<dbReference type="InterPro" id="IPR029026">
    <property type="entry name" value="tRNA_m1G_MTases_N"/>
</dbReference>
<dbReference type="InterPro" id="IPR016009">
    <property type="entry name" value="tRNA_MeTrfase_TRMD/TRM10"/>
</dbReference>
<dbReference type="NCBIfam" id="NF000648">
    <property type="entry name" value="PRK00026.1"/>
    <property type="match status" value="1"/>
</dbReference>
<dbReference type="NCBIfam" id="TIGR00088">
    <property type="entry name" value="trmD"/>
    <property type="match status" value="1"/>
</dbReference>
<dbReference type="PANTHER" id="PTHR46417">
    <property type="entry name" value="TRNA (GUANINE-N(1)-)-METHYLTRANSFERASE"/>
    <property type="match status" value="1"/>
</dbReference>
<dbReference type="PANTHER" id="PTHR46417:SF1">
    <property type="entry name" value="TRNA (GUANINE-N(1)-)-METHYLTRANSFERASE"/>
    <property type="match status" value="1"/>
</dbReference>
<dbReference type="Pfam" id="PF01746">
    <property type="entry name" value="tRNA_m1G_MT"/>
    <property type="match status" value="1"/>
</dbReference>
<dbReference type="PIRSF" id="PIRSF000386">
    <property type="entry name" value="tRNA_mtase"/>
    <property type="match status" value="1"/>
</dbReference>
<dbReference type="SUPFAM" id="SSF75217">
    <property type="entry name" value="alpha/beta knot"/>
    <property type="match status" value="1"/>
</dbReference>
<keyword id="KW-0963">Cytoplasm</keyword>
<keyword id="KW-0489">Methyltransferase</keyword>
<keyword id="KW-0949">S-adenosyl-L-methionine</keyword>
<keyword id="KW-0808">Transferase</keyword>
<keyword id="KW-0819">tRNA processing</keyword>